<name>G6PI_HISS2</name>
<proteinExistence type="inferred from homology"/>
<dbReference type="EC" id="5.3.1.9" evidence="1"/>
<dbReference type="EMBL" id="CP000947">
    <property type="protein sequence ID" value="ACA31156.1"/>
    <property type="molecule type" value="Genomic_DNA"/>
</dbReference>
<dbReference type="RefSeq" id="WP_012340561.1">
    <property type="nucleotide sequence ID" value="NC_010519.1"/>
</dbReference>
<dbReference type="SMR" id="B0UUD4"/>
<dbReference type="STRING" id="228400.HSM_1413"/>
<dbReference type="GeneID" id="31487711"/>
<dbReference type="KEGG" id="hsm:HSM_1413"/>
<dbReference type="HOGENOM" id="CLU_017947_3_1_6"/>
<dbReference type="UniPathway" id="UPA00109">
    <property type="reaction ID" value="UER00181"/>
</dbReference>
<dbReference type="UniPathway" id="UPA00138"/>
<dbReference type="GO" id="GO:0005829">
    <property type="term" value="C:cytosol"/>
    <property type="evidence" value="ECO:0007669"/>
    <property type="project" value="TreeGrafter"/>
</dbReference>
<dbReference type="GO" id="GO:0097367">
    <property type="term" value="F:carbohydrate derivative binding"/>
    <property type="evidence" value="ECO:0007669"/>
    <property type="project" value="InterPro"/>
</dbReference>
<dbReference type="GO" id="GO:0004347">
    <property type="term" value="F:glucose-6-phosphate isomerase activity"/>
    <property type="evidence" value="ECO:0007669"/>
    <property type="project" value="UniProtKB-UniRule"/>
</dbReference>
<dbReference type="GO" id="GO:0048029">
    <property type="term" value="F:monosaccharide binding"/>
    <property type="evidence" value="ECO:0007669"/>
    <property type="project" value="TreeGrafter"/>
</dbReference>
<dbReference type="GO" id="GO:0006094">
    <property type="term" value="P:gluconeogenesis"/>
    <property type="evidence" value="ECO:0007669"/>
    <property type="project" value="UniProtKB-UniRule"/>
</dbReference>
<dbReference type="GO" id="GO:0051156">
    <property type="term" value="P:glucose 6-phosphate metabolic process"/>
    <property type="evidence" value="ECO:0007669"/>
    <property type="project" value="TreeGrafter"/>
</dbReference>
<dbReference type="GO" id="GO:0006096">
    <property type="term" value="P:glycolytic process"/>
    <property type="evidence" value="ECO:0007669"/>
    <property type="project" value="UniProtKB-UniRule"/>
</dbReference>
<dbReference type="CDD" id="cd05015">
    <property type="entry name" value="SIS_PGI_1"/>
    <property type="match status" value="1"/>
</dbReference>
<dbReference type="CDD" id="cd05016">
    <property type="entry name" value="SIS_PGI_2"/>
    <property type="match status" value="1"/>
</dbReference>
<dbReference type="FunFam" id="1.10.1390.10:FF:000001">
    <property type="entry name" value="Glucose-6-phosphate isomerase"/>
    <property type="match status" value="1"/>
</dbReference>
<dbReference type="FunFam" id="3.40.50.10490:FF:000004">
    <property type="entry name" value="Glucose-6-phosphate isomerase"/>
    <property type="match status" value="1"/>
</dbReference>
<dbReference type="Gene3D" id="1.10.1390.10">
    <property type="match status" value="1"/>
</dbReference>
<dbReference type="Gene3D" id="3.40.50.10490">
    <property type="entry name" value="Glucose-6-phosphate isomerase like protein, domain 1"/>
    <property type="match status" value="2"/>
</dbReference>
<dbReference type="HAMAP" id="MF_00473">
    <property type="entry name" value="G6P_isomerase"/>
    <property type="match status" value="1"/>
</dbReference>
<dbReference type="InterPro" id="IPR001672">
    <property type="entry name" value="G6P_Isomerase"/>
</dbReference>
<dbReference type="InterPro" id="IPR023096">
    <property type="entry name" value="G6P_Isomerase_C"/>
</dbReference>
<dbReference type="InterPro" id="IPR018189">
    <property type="entry name" value="Phosphoglucose_isomerase_CS"/>
</dbReference>
<dbReference type="InterPro" id="IPR046348">
    <property type="entry name" value="SIS_dom_sf"/>
</dbReference>
<dbReference type="InterPro" id="IPR035476">
    <property type="entry name" value="SIS_PGI_1"/>
</dbReference>
<dbReference type="InterPro" id="IPR035482">
    <property type="entry name" value="SIS_PGI_2"/>
</dbReference>
<dbReference type="NCBIfam" id="NF001211">
    <property type="entry name" value="PRK00179.1"/>
    <property type="match status" value="1"/>
</dbReference>
<dbReference type="PANTHER" id="PTHR11469">
    <property type="entry name" value="GLUCOSE-6-PHOSPHATE ISOMERASE"/>
    <property type="match status" value="1"/>
</dbReference>
<dbReference type="PANTHER" id="PTHR11469:SF1">
    <property type="entry name" value="GLUCOSE-6-PHOSPHATE ISOMERASE"/>
    <property type="match status" value="1"/>
</dbReference>
<dbReference type="Pfam" id="PF00342">
    <property type="entry name" value="PGI"/>
    <property type="match status" value="1"/>
</dbReference>
<dbReference type="PRINTS" id="PR00662">
    <property type="entry name" value="G6PISOMERASE"/>
</dbReference>
<dbReference type="SUPFAM" id="SSF53697">
    <property type="entry name" value="SIS domain"/>
    <property type="match status" value="1"/>
</dbReference>
<dbReference type="PROSITE" id="PS00765">
    <property type="entry name" value="P_GLUCOSE_ISOMERASE_1"/>
    <property type="match status" value="1"/>
</dbReference>
<dbReference type="PROSITE" id="PS00174">
    <property type="entry name" value="P_GLUCOSE_ISOMERASE_2"/>
    <property type="match status" value="1"/>
</dbReference>
<dbReference type="PROSITE" id="PS51463">
    <property type="entry name" value="P_GLUCOSE_ISOMERASE_3"/>
    <property type="match status" value="1"/>
</dbReference>
<evidence type="ECO:0000255" key="1">
    <source>
        <dbReference type="HAMAP-Rule" id="MF_00473"/>
    </source>
</evidence>
<keyword id="KW-0963">Cytoplasm</keyword>
<keyword id="KW-0312">Gluconeogenesis</keyword>
<keyword id="KW-0324">Glycolysis</keyword>
<keyword id="KW-0413">Isomerase</keyword>
<organism>
    <name type="scientific">Histophilus somni (strain 2336)</name>
    <name type="common">Haemophilus somnus</name>
    <dbReference type="NCBI Taxonomy" id="228400"/>
    <lineage>
        <taxon>Bacteria</taxon>
        <taxon>Pseudomonadati</taxon>
        <taxon>Pseudomonadota</taxon>
        <taxon>Gammaproteobacteria</taxon>
        <taxon>Pasteurellales</taxon>
        <taxon>Pasteurellaceae</taxon>
        <taxon>Histophilus</taxon>
    </lineage>
</organism>
<accession>B0UUD4</accession>
<feature type="chain" id="PRO_1000081240" description="Glucose-6-phosphate isomerase">
    <location>
        <begin position="1"/>
        <end position="549"/>
    </location>
</feature>
<feature type="active site" description="Proton donor" evidence="1">
    <location>
        <position position="355"/>
    </location>
</feature>
<feature type="active site" evidence="1">
    <location>
        <position position="387"/>
    </location>
</feature>
<feature type="active site" evidence="1">
    <location>
        <position position="515"/>
    </location>
</feature>
<reference key="1">
    <citation type="submission" date="2008-02" db="EMBL/GenBank/DDBJ databases">
        <title>Complete sequence of Haemophilus somnus 2336.</title>
        <authorList>
            <consortium name="US DOE Joint Genome Institute"/>
            <person name="Siddaramappa S."/>
            <person name="Duncan A.J."/>
            <person name="Challacombe J.F."/>
            <person name="Rainey D."/>
            <person name="Gillaspy A.F."/>
            <person name="Carson M."/>
            <person name="Gipson J."/>
            <person name="Gipson M."/>
            <person name="Bruce D."/>
            <person name="Detter J.C."/>
            <person name="Han C.S."/>
            <person name="Land M."/>
            <person name="Tapia R."/>
            <person name="Thompson L.S."/>
            <person name="Orvis J."/>
            <person name="Zaitshik J."/>
            <person name="Barnes G."/>
            <person name="Brettin T.S."/>
            <person name="Dyer D.W."/>
            <person name="Inzana T.J."/>
        </authorList>
    </citation>
    <scope>NUCLEOTIDE SEQUENCE [LARGE SCALE GENOMIC DNA]</scope>
    <source>
        <strain>2336</strain>
    </source>
</reference>
<gene>
    <name evidence="1" type="primary">pgi</name>
    <name type="ordered locus">HSM_1413</name>
</gene>
<sequence>MQNINPTQTNAWKALEQHQKDLEQVTIQQLFEQEPTRFNDYSLKFAEQILVDYSKNNINQQTLSLLRQLAKECALNEATESMFNGEKINRTENRAVLHTALRNCANTPVYVDGKDVMPEVNAVLAKMKSFCQRVISGDWKGYTGKAITDVVNIGIGGSDLGPYMVTEALRPYKNHLTMHFVSNVDGTHIAETLKKVNPETTLFLVASKTFTTQETMTNAISARKWFLAAAQDESQIAKHFAALSTNVKEVEKFGIDTHNMFEFWDWVGGRYSLWSAIGLSIALSIGFDNFEQLLAGAHEMDKHFRTAPMEQNIPITLALIGIWNCNFLGAETEAMLPYDQYLHRFAAYFQQGNMESNGKYVDRSGQVINNYQTGPIIWGEPGTNGQHAFYQLIHQGTKIIPCDFIAPAQTHNVLSDHHNKLLSNFFAQTEALAFGKTQQEVEAEFIQAGKSLDEVKNIVPFKIFTGNKPTNSILVQKITPFTLGALIAMYEHKIFVQGVIFNIYSFDQWGVELGKQLANRILPELVGDEQINSHDSSTNGLINQFKSWR</sequence>
<protein>
    <recommendedName>
        <fullName evidence="1">Glucose-6-phosphate isomerase</fullName>
        <shortName evidence="1">GPI</shortName>
        <ecNumber evidence="1">5.3.1.9</ecNumber>
    </recommendedName>
    <alternativeName>
        <fullName evidence="1">Phosphoglucose isomerase</fullName>
        <shortName evidence="1">PGI</shortName>
    </alternativeName>
    <alternativeName>
        <fullName evidence="1">Phosphohexose isomerase</fullName>
        <shortName evidence="1">PHI</shortName>
    </alternativeName>
</protein>
<comment type="function">
    <text evidence="1">Catalyzes the reversible isomerization of glucose-6-phosphate to fructose-6-phosphate.</text>
</comment>
<comment type="catalytic activity">
    <reaction evidence="1">
        <text>alpha-D-glucose 6-phosphate = beta-D-fructose 6-phosphate</text>
        <dbReference type="Rhea" id="RHEA:11816"/>
        <dbReference type="ChEBI" id="CHEBI:57634"/>
        <dbReference type="ChEBI" id="CHEBI:58225"/>
        <dbReference type="EC" id="5.3.1.9"/>
    </reaction>
</comment>
<comment type="pathway">
    <text evidence="1">Carbohydrate biosynthesis; gluconeogenesis.</text>
</comment>
<comment type="pathway">
    <text evidence="1">Carbohydrate degradation; glycolysis; D-glyceraldehyde 3-phosphate and glycerone phosphate from D-glucose: step 2/4.</text>
</comment>
<comment type="subcellular location">
    <subcellularLocation>
        <location evidence="1">Cytoplasm</location>
    </subcellularLocation>
</comment>
<comment type="similarity">
    <text evidence="1">Belongs to the GPI family.</text>
</comment>